<sequence>MKKLLREASEYLLSRGIRFPQREAEDILMDLLEISSRSALHQAKLSSEEQSLYWKRLRKRGDRCPTAYIHGKVHFLGVELQVTPQVLIPRQETEIFVEQIIGYLQMHKEKTTFYDVCCGSGCIGLAVRKHCPHVRVTLSDISPEALAIAESNARSNALAVDFLLGDLFDPFSFPADVLVCNPPYLSYKEFFESDPEVRCHEPWKALVGGVSGLEFYHRIATHIHKILVSGGVGWLEIGSTQGEDVKQIFHAKGIRGRVLKDYAQLDRFFFLENQANDAVSSGEVSGFSER</sequence>
<name>PRMC_CHLT2</name>
<comment type="function">
    <text evidence="2">Methylates the class 1 translation termination release factors RF1/PrfA and RF2/PrfB on the glutamine residue of the universally conserved GGQ motif.</text>
</comment>
<comment type="catalytic activity">
    <reaction evidence="2">
        <text>L-glutaminyl-[peptide chain release factor] + S-adenosyl-L-methionine = N(5)-methyl-L-glutaminyl-[peptide chain release factor] + S-adenosyl-L-homocysteine + H(+)</text>
        <dbReference type="Rhea" id="RHEA:42896"/>
        <dbReference type="Rhea" id="RHEA-COMP:10271"/>
        <dbReference type="Rhea" id="RHEA-COMP:10272"/>
        <dbReference type="ChEBI" id="CHEBI:15378"/>
        <dbReference type="ChEBI" id="CHEBI:30011"/>
        <dbReference type="ChEBI" id="CHEBI:57856"/>
        <dbReference type="ChEBI" id="CHEBI:59789"/>
        <dbReference type="ChEBI" id="CHEBI:61891"/>
        <dbReference type="EC" id="2.1.1.297"/>
    </reaction>
</comment>
<comment type="similarity">
    <text evidence="3">Belongs to the protein N5-glutamine methyltransferase family. PrmC subfamily.</text>
</comment>
<dbReference type="EC" id="2.1.1.297"/>
<dbReference type="EMBL" id="AY600244">
    <property type="protein sequence ID" value="AAT35566.1"/>
    <property type="molecule type" value="Genomic_DNA"/>
</dbReference>
<dbReference type="EMBL" id="AM884176">
    <property type="protein sequence ID" value="CAP03718.1"/>
    <property type="molecule type" value="Genomic_DNA"/>
</dbReference>
<dbReference type="RefSeq" id="WP_009873502.1">
    <property type="nucleotide sequence ID" value="NC_010287.1"/>
</dbReference>
<dbReference type="RefSeq" id="YP_001654363.1">
    <property type="nucleotide sequence ID" value="NC_010287.1"/>
</dbReference>
<dbReference type="SMR" id="B0B9D1"/>
<dbReference type="KEGG" id="ctb:CTL0279"/>
<dbReference type="PATRIC" id="fig|471472.4.peg.303"/>
<dbReference type="HOGENOM" id="CLU_018398_3_1_0"/>
<dbReference type="BRENDA" id="2.1.1.297">
    <property type="organism ID" value="1315"/>
</dbReference>
<dbReference type="Proteomes" id="UP001154402">
    <property type="component" value="Chromosome"/>
</dbReference>
<dbReference type="GO" id="GO:0003676">
    <property type="term" value="F:nucleic acid binding"/>
    <property type="evidence" value="ECO:0007669"/>
    <property type="project" value="InterPro"/>
</dbReference>
<dbReference type="GO" id="GO:0008276">
    <property type="term" value="F:protein methyltransferase activity"/>
    <property type="evidence" value="ECO:0000314"/>
    <property type="project" value="UniProtKB"/>
</dbReference>
<dbReference type="GO" id="GO:0102559">
    <property type="term" value="F:protein-(glutamine-N5) methyltransferase activity"/>
    <property type="evidence" value="ECO:0007669"/>
    <property type="project" value="UniProtKB-EC"/>
</dbReference>
<dbReference type="GO" id="GO:0036009">
    <property type="term" value="F:protein-glutamine N-methyltransferase activity"/>
    <property type="evidence" value="ECO:0000316"/>
    <property type="project" value="UniProtKB"/>
</dbReference>
<dbReference type="GO" id="GO:0008757">
    <property type="term" value="F:S-adenosylmethionine-dependent methyltransferase activity"/>
    <property type="evidence" value="ECO:0000314"/>
    <property type="project" value="UniProtKB"/>
</dbReference>
<dbReference type="GO" id="GO:0018364">
    <property type="term" value="P:peptidyl-glutamine methylation"/>
    <property type="evidence" value="ECO:0000316"/>
    <property type="project" value="UniProtKB"/>
</dbReference>
<dbReference type="GO" id="GO:0006479">
    <property type="term" value="P:protein methylation"/>
    <property type="evidence" value="ECO:0000314"/>
    <property type="project" value="UniProtKB"/>
</dbReference>
<dbReference type="CDD" id="cd02440">
    <property type="entry name" value="AdoMet_MTases"/>
    <property type="match status" value="1"/>
</dbReference>
<dbReference type="FunFam" id="3.40.50.150:FF:000053">
    <property type="entry name" value="Release factor glutamine methyltransferase"/>
    <property type="match status" value="1"/>
</dbReference>
<dbReference type="Gene3D" id="1.10.8.10">
    <property type="entry name" value="DNA helicase RuvA subunit, C-terminal domain"/>
    <property type="match status" value="1"/>
</dbReference>
<dbReference type="Gene3D" id="3.40.50.150">
    <property type="entry name" value="Vaccinia Virus protein VP39"/>
    <property type="match status" value="1"/>
</dbReference>
<dbReference type="HAMAP" id="MF_02126">
    <property type="entry name" value="RF_methyltr_PrmC"/>
    <property type="match status" value="1"/>
</dbReference>
<dbReference type="InterPro" id="IPR002052">
    <property type="entry name" value="DNA_methylase_N6_adenine_CS"/>
</dbReference>
<dbReference type="InterPro" id="IPR004556">
    <property type="entry name" value="HemK-like"/>
</dbReference>
<dbReference type="InterPro" id="IPR050320">
    <property type="entry name" value="N5-glutamine_MTase"/>
</dbReference>
<dbReference type="InterPro" id="IPR040758">
    <property type="entry name" value="PrmC_N"/>
</dbReference>
<dbReference type="InterPro" id="IPR019874">
    <property type="entry name" value="RF_methyltr_PrmC"/>
</dbReference>
<dbReference type="InterPro" id="IPR029063">
    <property type="entry name" value="SAM-dependent_MTases_sf"/>
</dbReference>
<dbReference type="InterPro" id="IPR007848">
    <property type="entry name" value="Small_mtfrase_dom"/>
</dbReference>
<dbReference type="NCBIfam" id="TIGR00536">
    <property type="entry name" value="hemK_fam"/>
    <property type="match status" value="1"/>
</dbReference>
<dbReference type="NCBIfam" id="TIGR03534">
    <property type="entry name" value="RF_mod_PrmC"/>
    <property type="match status" value="1"/>
</dbReference>
<dbReference type="PANTHER" id="PTHR18895">
    <property type="entry name" value="HEMK METHYLTRANSFERASE"/>
    <property type="match status" value="1"/>
</dbReference>
<dbReference type="PANTHER" id="PTHR18895:SF74">
    <property type="entry name" value="MTRF1L RELEASE FACTOR GLUTAMINE METHYLTRANSFERASE"/>
    <property type="match status" value="1"/>
</dbReference>
<dbReference type="Pfam" id="PF05175">
    <property type="entry name" value="MTS"/>
    <property type="match status" value="1"/>
</dbReference>
<dbReference type="Pfam" id="PF17827">
    <property type="entry name" value="PrmC_N"/>
    <property type="match status" value="1"/>
</dbReference>
<dbReference type="SUPFAM" id="SSF53335">
    <property type="entry name" value="S-adenosyl-L-methionine-dependent methyltransferases"/>
    <property type="match status" value="1"/>
</dbReference>
<protein>
    <recommendedName>
        <fullName>Release factor glutamine methyltransferase</fullName>
        <shortName>RF MTase</shortName>
        <ecNumber>2.1.1.297</ecNumber>
    </recommendedName>
    <alternativeName>
        <fullName>N5-glutamine methyltransferase PrmC</fullName>
    </alternativeName>
    <alternativeName>
        <fullName>Protein-(glutamine-N5) MTase PrmC</fullName>
    </alternativeName>
    <alternativeName>
        <fullName>Protein-glutamine N-methyltransferase PrmC</fullName>
    </alternativeName>
</protein>
<proteinExistence type="evidence at protein level"/>
<organism>
    <name type="scientific">Chlamydia trachomatis serovar L2 (strain ATCC VR-902B / DSM 19102 / 434/Bu)</name>
    <dbReference type="NCBI Taxonomy" id="471472"/>
    <lineage>
        <taxon>Bacteria</taxon>
        <taxon>Pseudomonadati</taxon>
        <taxon>Chlamydiota</taxon>
        <taxon>Chlamydiia</taxon>
        <taxon>Chlamydiales</taxon>
        <taxon>Chlamydiaceae</taxon>
        <taxon>Chlamydia/Chlamydophila group</taxon>
        <taxon>Chlamydia</taxon>
    </lineage>
</organism>
<accession>B0B9D1</accession>
<accession>Q6J519</accession>
<keyword id="KW-0489">Methyltransferase</keyword>
<keyword id="KW-0949">S-adenosyl-L-methionine</keyword>
<keyword id="KW-0808">Transferase</keyword>
<evidence type="ECO:0000250" key="1"/>
<evidence type="ECO:0000269" key="2">
    <source>
    </source>
</evidence>
<evidence type="ECO:0000305" key="3"/>
<gene>
    <name type="primary">prmC</name>
    <name type="ordered locus">CTL0279</name>
</gene>
<feature type="chain" id="PRO_0000414509" description="Release factor glutamine methyltransferase">
    <location>
        <begin position="1"/>
        <end position="290"/>
    </location>
</feature>
<feature type="binding site" evidence="1">
    <location>
        <position position="140"/>
    </location>
    <ligand>
        <name>S-adenosyl-L-methionine</name>
        <dbReference type="ChEBI" id="CHEBI:59789"/>
    </ligand>
</feature>
<feature type="binding site" evidence="1">
    <location>
        <begin position="181"/>
        <end position="184"/>
    </location>
    <ligand>
        <name>substrate</name>
    </ligand>
</feature>
<feature type="binding site" evidence="1">
    <location>
        <position position="181"/>
    </location>
    <ligand>
        <name>S-adenosyl-L-methionine</name>
        <dbReference type="ChEBI" id="CHEBI:59789"/>
    </ligand>
</feature>
<reference key="1">
    <citation type="journal article" date="2005" name="J. Bacteriol.">
        <title>The N5-glutamine S-adenosyl-L-methionine-dependent methyltransferase PrmC/HemK in Chlamydia trachomatis methylates class 1 release factors.</title>
        <authorList>
            <person name="Pannekoek Y."/>
            <person name="Heurgue-Hamard V."/>
            <person name="Langerak A.A."/>
            <person name="Speijer D."/>
            <person name="Buckingham R.H."/>
            <person name="van der Ende A."/>
        </authorList>
    </citation>
    <scope>NUCLEOTIDE SEQUENCE [GENOMIC DNA]</scope>
    <scope>FUNCTION</scope>
    <scope>CATALYTIC ACTIVITY</scope>
    <source>
        <strain>ATCC VR-902B / DSM 19102 / 434/Bu</strain>
    </source>
</reference>
<reference key="2">
    <citation type="journal article" date="2008" name="Genome Res.">
        <title>Chlamydia trachomatis: genome sequence analysis of lymphogranuloma venereum isolates.</title>
        <authorList>
            <person name="Thomson N.R."/>
            <person name="Holden M.T.G."/>
            <person name="Carder C."/>
            <person name="Lennard N."/>
            <person name="Lockey S.J."/>
            <person name="Marsh P."/>
            <person name="Skipp P."/>
            <person name="O'Connor C.D."/>
            <person name="Goodhead I."/>
            <person name="Norbertzcak H."/>
            <person name="Harris B."/>
            <person name="Ormond D."/>
            <person name="Rance R."/>
            <person name="Quail M.A."/>
            <person name="Parkhill J."/>
            <person name="Stephens R.S."/>
            <person name="Clarke I.N."/>
        </authorList>
    </citation>
    <scope>NUCLEOTIDE SEQUENCE [LARGE SCALE GENOMIC DNA]</scope>
    <source>
        <strain>ATCC VR-902B / DSM 19102 / 434/Bu</strain>
    </source>
</reference>